<gene>
    <name evidence="1" type="primary">panB</name>
    <name type="ordered locus">BUsg_191</name>
</gene>
<reference key="1">
    <citation type="journal article" date="2002" name="Science">
        <title>50 million years of genomic stasis in endosymbiotic bacteria.</title>
        <authorList>
            <person name="Tamas I."/>
            <person name="Klasson L."/>
            <person name="Canbaeck B."/>
            <person name="Naeslund A.K."/>
            <person name="Eriksson A.-S."/>
            <person name="Wernegreen J.J."/>
            <person name="Sandstroem J.P."/>
            <person name="Moran N.A."/>
            <person name="Andersson S.G.E."/>
        </authorList>
    </citation>
    <scope>NUCLEOTIDE SEQUENCE [LARGE SCALE GENOMIC DNA]</scope>
    <source>
        <strain>Sg</strain>
    </source>
</reference>
<sequence length="263" mass="29352">MESITISKIQNWKKNQIKFAAITAYDFSFSRLFEKEGIPIMLVGDSLGMTIQGHNSTLPVKIQDIKYHTKAVRRGAPNSFLLSDLPFMSYYSIEETLKNTAKIIQSGANMIKIEGGKWLVETVKELSKRSILVCGHIGLTPQSINFLSGYKIQGKEKNDAQRIIDEAFILEEAGIKMLVLECIPSLLAKKITENLSIPVIGIGSGHHTDGQILVMQDLLGITDGKKLKFVKNFLCHNGSIQNAIKQYINEVKNGNFPSEKYSF</sequence>
<comment type="function">
    <text evidence="1">Catalyzes the reversible reaction in which hydroxymethyl group from 5,10-methylenetetrahydrofolate is transferred onto alpha-ketoisovalerate to form ketopantoate.</text>
</comment>
<comment type="catalytic activity">
    <reaction evidence="1">
        <text>3-methyl-2-oxobutanoate + (6R)-5,10-methylene-5,6,7,8-tetrahydrofolate + H2O = 2-dehydropantoate + (6S)-5,6,7,8-tetrahydrofolate</text>
        <dbReference type="Rhea" id="RHEA:11824"/>
        <dbReference type="ChEBI" id="CHEBI:11561"/>
        <dbReference type="ChEBI" id="CHEBI:11851"/>
        <dbReference type="ChEBI" id="CHEBI:15377"/>
        <dbReference type="ChEBI" id="CHEBI:15636"/>
        <dbReference type="ChEBI" id="CHEBI:57453"/>
        <dbReference type="EC" id="2.1.2.11"/>
    </reaction>
</comment>
<comment type="cofactor">
    <cofactor evidence="1">
        <name>Mg(2+)</name>
        <dbReference type="ChEBI" id="CHEBI:18420"/>
    </cofactor>
    <text evidence="1">Binds 1 Mg(2+) ion per subunit.</text>
</comment>
<comment type="pathway">
    <text evidence="1">Cofactor biosynthesis; (R)-pantothenate biosynthesis; (R)-pantoate from 3-methyl-2-oxobutanoate: step 1/2.</text>
</comment>
<comment type="subunit">
    <text evidence="1">Homodecamer; pentamer of dimers.</text>
</comment>
<comment type="subcellular location">
    <subcellularLocation>
        <location evidence="1">Cytoplasm</location>
    </subcellularLocation>
</comment>
<comment type="similarity">
    <text evidence="1">Belongs to the PanB family.</text>
</comment>
<proteinExistence type="inferred from homology"/>
<keyword id="KW-0963">Cytoplasm</keyword>
<keyword id="KW-0460">Magnesium</keyword>
<keyword id="KW-0479">Metal-binding</keyword>
<keyword id="KW-0566">Pantothenate biosynthesis</keyword>
<keyword id="KW-0808">Transferase</keyword>
<dbReference type="EC" id="2.1.2.11" evidence="1"/>
<dbReference type="EMBL" id="AE013218">
    <property type="protein sequence ID" value="AAM67756.1"/>
    <property type="molecule type" value="Genomic_DNA"/>
</dbReference>
<dbReference type="RefSeq" id="WP_011053723.1">
    <property type="nucleotide sequence ID" value="NC_004061.1"/>
</dbReference>
<dbReference type="SMR" id="Q8K9U6"/>
<dbReference type="STRING" id="198804.BUsg_191"/>
<dbReference type="GeneID" id="93003659"/>
<dbReference type="KEGG" id="bas:BUsg_191"/>
<dbReference type="eggNOG" id="COG0413">
    <property type="taxonomic scope" value="Bacteria"/>
</dbReference>
<dbReference type="HOGENOM" id="CLU_036645_1_0_6"/>
<dbReference type="UniPathway" id="UPA00028">
    <property type="reaction ID" value="UER00003"/>
</dbReference>
<dbReference type="Proteomes" id="UP000000416">
    <property type="component" value="Chromosome"/>
</dbReference>
<dbReference type="GO" id="GO:0005737">
    <property type="term" value="C:cytoplasm"/>
    <property type="evidence" value="ECO:0007669"/>
    <property type="project" value="UniProtKB-SubCell"/>
</dbReference>
<dbReference type="GO" id="GO:0003864">
    <property type="term" value="F:3-methyl-2-oxobutanoate hydroxymethyltransferase activity"/>
    <property type="evidence" value="ECO:0007669"/>
    <property type="project" value="UniProtKB-UniRule"/>
</dbReference>
<dbReference type="GO" id="GO:0000287">
    <property type="term" value="F:magnesium ion binding"/>
    <property type="evidence" value="ECO:0007669"/>
    <property type="project" value="TreeGrafter"/>
</dbReference>
<dbReference type="GO" id="GO:0015940">
    <property type="term" value="P:pantothenate biosynthetic process"/>
    <property type="evidence" value="ECO:0007669"/>
    <property type="project" value="UniProtKB-UniRule"/>
</dbReference>
<dbReference type="CDD" id="cd06557">
    <property type="entry name" value="KPHMT-like"/>
    <property type="match status" value="1"/>
</dbReference>
<dbReference type="FunFam" id="3.20.20.60:FF:000003">
    <property type="entry name" value="3-methyl-2-oxobutanoate hydroxymethyltransferase"/>
    <property type="match status" value="1"/>
</dbReference>
<dbReference type="Gene3D" id="3.20.20.60">
    <property type="entry name" value="Phosphoenolpyruvate-binding domains"/>
    <property type="match status" value="1"/>
</dbReference>
<dbReference type="HAMAP" id="MF_00156">
    <property type="entry name" value="PanB"/>
    <property type="match status" value="1"/>
</dbReference>
<dbReference type="InterPro" id="IPR003700">
    <property type="entry name" value="Pantoate_hydroxy_MeTrfase"/>
</dbReference>
<dbReference type="InterPro" id="IPR015813">
    <property type="entry name" value="Pyrv/PenolPyrv_kinase-like_dom"/>
</dbReference>
<dbReference type="InterPro" id="IPR040442">
    <property type="entry name" value="Pyrv_kinase-like_dom_sf"/>
</dbReference>
<dbReference type="NCBIfam" id="TIGR00222">
    <property type="entry name" value="panB"/>
    <property type="match status" value="1"/>
</dbReference>
<dbReference type="NCBIfam" id="NF001452">
    <property type="entry name" value="PRK00311.1"/>
    <property type="match status" value="1"/>
</dbReference>
<dbReference type="PANTHER" id="PTHR20881">
    <property type="entry name" value="3-METHYL-2-OXOBUTANOATE HYDROXYMETHYLTRANSFERASE"/>
    <property type="match status" value="1"/>
</dbReference>
<dbReference type="PANTHER" id="PTHR20881:SF0">
    <property type="entry name" value="3-METHYL-2-OXOBUTANOATE HYDROXYMETHYLTRANSFERASE"/>
    <property type="match status" value="1"/>
</dbReference>
<dbReference type="Pfam" id="PF02548">
    <property type="entry name" value="Pantoate_transf"/>
    <property type="match status" value="1"/>
</dbReference>
<dbReference type="PIRSF" id="PIRSF000388">
    <property type="entry name" value="Pantoate_hydroxy_MeTrfase"/>
    <property type="match status" value="1"/>
</dbReference>
<dbReference type="SUPFAM" id="SSF51621">
    <property type="entry name" value="Phosphoenolpyruvate/pyruvate domain"/>
    <property type="match status" value="1"/>
</dbReference>
<protein>
    <recommendedName>
        <fullName evidence="1">3-methyl-2-oxobutanoate hydroxymethyltransferase</fullName>
        <ecNumber evidence="1">2.1.2.11</ecNumber>
    </recommendedName>
    <alternativeName>
        <fullName evidence="1">Ketopantoate hydroxymethyltransferase</fullName>
        <shortName evidence="1">KPHMT</shortName>
    </alternativeName>
</protein>
<name>PANB_BUCAP</name>
<organism>
    <name type="scientific">Buchnera aphidicola subsp. Schizaphis graminum (strain Sg)</name>
    <dbReference type="NCBI Taxonomy" id="198804"/>
    <lineage>
        <taxon>Bacteria</taxon>
        <taxon>Pseudomonadati</taxon>
        <taxon>Pseudomonadota</taxon>
        <taxon>Gammaproteobacteria</taxon>
        <taxon>Enterobacterales</taxon>
        <taxon>Erwiniaceae</taxon>
        <taxon>Buchnera</taxon>
    </lineage>
</organism>
<accession>Q8K9U6</accession>
<feature type="chain" id="PRO_0000184829" description="3-methyl-2-oxobutanoate hydroxymethyltransferase">
    <location>
        <begin position="1"/>
        <end position="263"/>
    </location>
</feature>
<feature type="active site" description="Proton acceptor" evidence="1">
    <location>
        <position position="181"/>
    </location>
</feature>
<feature type="binding site" evidence="1">
    <location>
        <begin position="45"/>
        <end position="46"/>
    </location>
    <ligand>
        <name>3-methyl-2-oxobutanoate</name>
        <dbReference type="ChEBI" id="CHEBI:11851"/>
    </ligand>
</feature>
<feature type="binding site" evidence="1">
    <location>
        <position position="45"/>
    </location>
    <ligand>
        <name>Mg(2+)</name>
        <dbReference type="ChEBI" id="CHEBI:18420"/>
    </ligand>
</feature>
<feature type="binding site" evidence="1">
    <location>
        <position position="84"/>
    </location>
    <ligand>
        <name>3-methyl-2-oxobutanoate</name>
        <dbReference type="ChEBI" id="CHEBI:11851"/>
    </ligand>
</feature>
<feature type="binding site" evidence="1">
    <location>
        <position position="84"/>
    </location>
    <ligand>
        <name>Mg(2+)</name>
        <dbReference type="ChEBI" id="CHEBI:18420"/>
    </ligand>
</feature>
<feature type="binding site" evidence="1">
    <location>
        <position position="112"/>
    </location>
    <ligand>
        <name>3-methyl-2-oxobutanoate</name>
        <dbReference type="ChEBI" id="CHEBI:11851"/>
    </ligand>
</feature>
<feature type="binding site" evidence="1">
    <location>
        <position position="114"/>
    </location>
    <ligand>
        <name>Mg(2+)</name>
        <dbReference type="ChEBI" id="CHEBI:18420"/>
    </ligand>
</feature>
<evidence type="ECO:0000255" key="1">
    <source>
        <dbReference type="HAMAP-Rule" id="MF_00156"/>
    </source>
</evidence>